<keyword id="KW-0067">ATP-binding</keyword>
<keyword id="KW-0130">Cell adhesion</keyword>
<keyword id="KW-1003">Cell membrane</keyword>
<keyword id="KW-1015">Disulfide bond</keyword>
<keyword id="KW-0325">Glycoprotein</keyword>
<keyword id="KW-0393">Immunoglobulin domain</keyword>
<keyword id="KW-0418">Kinase</keyword>
<keyword id="KW-0472">Membrane</keyword>
<keyword id="KW-0547">Nucleotide-binding</keyword>
<keyword id="KW-0597">Phosphoprotein</keyword>
<keyword id="KW-0675">Receptor</keyword>
<keyword id="KW-1185">Reference proteome</keyword>
<keyword id="KW-0677">Repeat</keyword>
<keyword id="KW-0732">Signal</keyword>
<keyword id="KW-0808">Transferase</keyword>
<keyword id="KW-0812">Transmembrane</keyword>
<keyword id="KW-1133">Transmembrane helix</keyword>
<keyword id="KW-0829">Tyrosine-protein kinase</keyword>
<name>TYRO3_XENLA</name>
<sequence length="880" mass="97934">MVYPGPPGLIAGLLLAALSLSCVDGAKALGFVGHGYNLTVSQGHEAKLNCSLQGIEEPEIQWLKDGVPVQSADQMYIPVDEDHWISFLSLKNVERPDAGKYWCEAEHSGRKSVSDAIWIMVEGVPYFTLEPKDLSVTPNSPFNMTCAAVGPPEPLVIIWWVGDSPLGKSESSPSVLQMSGIHERTAFSCEAHNAKGVSSSRTAIVEVKGLPYPPFNVTISKVTGSTATVTWFPGFNSFSLIKSCTIQVQSLHGNREMYSRLISAPPFAVLLDELQPLTNHSVRVQCTNEMGASPFTEWRTFHTKETVPQLLPQNVHMTKTETSLLLDWEEVEPDREGYNILGFKVQWEQENATQGELFVQENQANLTKWNPEKDLTIRICIANAAGCGPWSEFLLAGSKEEAGKQRHPHTRMSWVPMVLGILTALVTVVAMTLIFLRKGRKETRFGNMLGSMLGRGGPVIQFTAARSFNRRGPEMMEATLDSIGISEELKSKLKDVLIQQQQFTLGRTLGKGEFGSVREAQLKMEDDTMQKVAVKMLKAEIFCSSDIEEFLREAAFMKEFDHPNVCKLIGVSLRSRTKGRLPVPMVILPFMKHGDLHTFLLMSRIGEEPITLPVQTLVRFMIDICSGMEYLSSKNFIHRDLATRNCMLNEDMTVCVADFGLSKKIYSGDYYRQGCASKLPVKWLALESLADNVYTVHSDVWAFGVTLWEIATLGQTPYAGVENSEIYSYLIAGNRLKQPLDCLDELYEMMCQCWITEPKRRPSFVDLKQRLEAIWGRLSILSASQDQLYVNLGETCGAAAAVSGLHSAFCSEEDYCAGPSQTCGTSAITSDYRYIVNPGCLREGNEWSSSAQNGEARGLLHEEEEEEEEEMQEEQVVITL</sequence>
<accession>Q8QFP9</accession>
<evidence type="ECO:0000250" key="1"/>
<evidence type="ECO:0000255" key="2"/>
<evidence type="ECO:0000255" key="3">
    <source>
        <dbReference type="PROSITE-ProRule" id="PRU00114"/>
    </source>
</evidence>
<evidence type="ECO:0000255" key="4">
    <source>
        <dbReference type="PROSITE-ProRule" id="PRU00159"/>
    </source>
</evidence>
<evidence type="ECO:0000255" key="5">
    <source>
        <dbReference type="PROSITE-ProRule" id="PRU00316"/>
    </source>
</evidence>
<evidence type="ECO:0000255" key="6">
    <source>
        <dbReference type="PROSITE-ProRule" id="PRU10028"/>
    </source>
</evidence>
<evidence type="ECO:0000256" key="7">
    <source>
        <dbReference type="SAM" id="MobiDB-lite"/>
    </source>
</evidence>
<evidence type="ECO:0000269" key="8">
    <source>
    </source>
</evidence>
<feature type="signal peptide" evidence="2">
    <location>
        <begin position="1"/>
        <end position="28"/>
    </location>
</feature>
<feature type="chain" id="PRO_0000346116" description="Tyrosine-protein kinase receptor TYRO3">
    <location>
        <begin position="29"/>
        <end position="880"/>
    </location>
</feature>
<feature type="topological domain" description="Extracellular" evidence="2">
    <location>
        <begin position="29"/>
        <end position="414"/>
    </location>
</feature>
<feature type="transmembrane region" description="Helical" evidence="2">
    <location>
        <begin position="415"/>
        <end position="435"/>
    </location>
</feature>
<feature type="topological domain" description="Cytoplasmic" evidence="2">
    <location>
        <begin position="436"/>
        <end position="880"/>
    </location>
</feature>
<feature type="domain" description="Ig-like C2-type 1">
    <location>
        <begin position="29"/>
        <end position="114"/>
    </location>
</feature>
<feature type="domain" description="Ig-like C2-type 2">
    <location>
        <begin position="125"/>
        <end position="206"/>
    </location>
</feature>
<feature type="domain" description="Fibronectin type-III 1" evidence="5">
    <location>
        <begin position="213"/>
        <end position="306"/>
    </location>
</feature>
<feature type="domain" description="Fibronectin type-III 2" evidence="5">
    <location>
        <begin position="311"/>
        <end position="401"/>
    </location>
</feature>
<feature type="domain" description="Protein kinase" evidence="4">
    <location>
        <begin position="503"/>
        <end position="774"/>
    </location>
</feature>
<feature type="region of interest" description="Disordered" evidence="7">
    <location>
        <begin position="846"/>
        <end position="880"/>
    </location>
</feature>
<feature type="compositionally biased region" description="Acidic residues" evidence="7">
    <location>
        <begin position="862"/>
        <end position="873"/>
    </location>
</feature>
<feature type="active site" description="Proton acceptor" evidence="4 6">
    <location>
        <position position="640"/>
    </location>
</feature>
<feature type="binding site" evidence="4">
    <location>
        <begin position="509"/>
        <end position="517"/>
    </location>
    <ligand>
        <name>ATP</name>
        <dbReference type="ChEBI" id="CHEBI:30616"/>
    </ligand>
</feature>
<feature type="binding site" evidence="4">
    <location>
        <position position="535"/>
    </location>
    <ligand>
        <name>ATP</name>
        <dbReference type="ChEBI" id="CHEBI:30616"/>
    </ligand>
</feature>
<feature type="modified residue" description="Phosphotyrosine; by autocatalysis" evidence="1">
    <location>
        <position position="671"/>
    </location>
</feature>
<feature type="glycosylation site" description="N-linked (GlcNAc...) asparagine" evidence="2">
    <location>
        <position position="37"/>
    </location>
</feature>
<feature type="glycosylation site" description="N-linked (GlcNAc...) asparagine" evidence="2">
    <location>
        <position position="49"/>
    </location>
</feature>
<feature type="glycosylation site" description="N-linked (GlcNAc...) asparagine" evidence="2">
    <location>
        <position position="143"/>
    </location>
</feature>
<feature type="glycosylation site" description="N-linked (GlcNAc...) asparagine" evidence="2">
    <location>
        <position position="216"/>
    </location>
</feature>
<feature type="glycosylation site" description="N-linked (GlcNAc...) asparagine" evidence="2">
    <location>
        <position position="279"/>
    </location>
</feature>
<feature type="glycosylation site" description="N-linked (GlcNAc...) asparagine" evidence="2">
    <location>
        <position position="351"/>
    </location>
</feature>
<feature type="glycosylation site" description="N-linked (GlcNAc...) asparagine" evidence="2">
    <location>
        <position position="365"/>
    </location>
</feature>
<feature type="disulfide bond" evidence="3">
    <location>
        <begin position="50"/>
        <end position="103"/>
    </location>
</feature>
<feature type="disulfide bond" evidence="3">
    <location>
        <begin position="146"/>
        <end position="189"/>
    </location>
</feature>
<reference key="1">
    <citation type="journal article" date="2002" name="Gene">
        <title>Molecular cloning, expression and partial characterization of Xksy, Xenopus member of the Sky family of receptor tyrosine kinases.</title>
        <authorList>
            <person name="Kishi Y.A."/>
            <person name="Funakoshi H."/>
            <person name="Matsumoto K."/>
            <person name="Nakamura T."/>
        </authorList>
    </citation>
    <scope>NUCLEOTIDE SEQUENCE [MRNA]</scope>
    <scope>PHOSPHORYLATION</scope>
    <scope>SUBCELLULAR LOCATION</scope>
    <scope>DEVELOPMENTAL STAGE</scope>
    <scope>TISSUE SPECIFICITY</scope>
    <source>
        <tissue>Tail bud</tissue>
    </source>
</reference>
<dbReference type="EC" id="2.7.10.1"/>
<dbReference type="EMBL" id="AB022787">
    <property type="protein sequence ID" value="BAB87808.1"/>
    <property type="molecule type" value="mRNA"/>
</dbReference>
<dbReference type="RefSeq" id="NP_001082223.1">
    <property type="nucleotide sequence ID" value="NM_001088754.2"/>
</dbReference>
<dbReference type="SMR" id="Q8QFP9"/>
<dbReference type="GlyCosmos" id="Q8QFP9">
    <property type="glycosylation" value="7 sites, No reported glycans"/>
</dbReference>
<dbReference type="GeneID" id="398301"/>
<dbReference type="KEGG" id="xla:398301"/>
<dbReference type="AGR" id="Xenbase:XB-GENE-922154"/>
<dbReference type="CTD" id="398301"/>
<dbReference type="Xenbase" id="XB-GENE-922154">
    <property type="gene designation" value="tyro3.L"/>
</dbReference>
<dbReference type="OMA" id="DCREDIY"/>
<dbReference type="OrthoDB" id="4062651at2759"/>
<dbReference type="Proteomes" id="UP000186698">
    <property type="component" value="Chromosome 8L"/>
</dbReference>
<dbReference type="Bgee" id="398301">
    <property type="expression patterns" value="Expressed in brain and 19 other cell types or tissues"/>
</dbReference>
<dbReference type="GO" id="GO:0005886">
    <property type="term" value="C:plasma membrane"/>
    <property type="evidence" value="ECO:0000318"/>
    <property type="project" value="GO_Central"/>
</dbReference>
<dbReference type="GO" id="GO:0043235">
    <property type="term" value="C:receptor complex"/>
    <property type="evidence" value="ECO:0000318"/>
    <property type="project" value="GO_Central"/>
</dbReference>
<dbReference type="GO" id="GO:0005524">
    <property type="term" value="F:ATP binding"/>
    <property type="evidence" value="ECO:0007669"/>
    <property type="project" value="UniProtKB-KW"/>
</dbReference>
<dbReference type="GO" id="GO:0004714">
    <property type="term" value="F:transmembrane receptor protein tyrosine kinase activity"/>
    <property type="evidence" value="ECO:0000318"/>
    <property type="project" value="GO_Central"/>
</dbReference>
<dbReference type="GO" id="GO:0007155">
    <property type="term" value="P:cell adhesion"/>
    <property type="evidence" value="ECO:0007669"/>
    <property type="project" value="UniProtKB-KW"/>
</dbReference>
<dbReference type="GO" id="GO:0016477">
    <property type="term" value="P:cell migration"/>
    <property type="evidence" value="ECO:0000318"/>
    <property type="project" value="GO_Central"/>
</dbReference>
<dbReference type="GO" id="GO:0007169">
    <property type="term" value="P:cell surface receptor protein tyrosine kinase signaling pathway"/>
    <property type="evidence" value="ECO:0000318"/>
    <property type="project" value="GO_Central"/>
</dbReference>
<dbReference type="GO" id="GO:0007399">
    <property type="term" value="P:nervous system development"/>
    <property type="evidence" value="ECO:0000318"/>
    <property type="project" value="GO_Central"/>
</dbReference>
<dbReference type="GO" id="GO:0006909">
    <property type="term" value="P:phagocytosis"/>
    <property type="evidence" value="ECO:0000318"/>
    <property type="project" value="GO_Central"/>
</dbReference>
<dbReference type="CDD" id="cd00063">
    <property type="entry name" value="FN3"/>
    <property type="match status" value="2"/>
</dbReference>
<dbReference type="CDD" id="cd05749">
    <property type="entry name" value="IgI_2_Axl_Tyro3_like"/>
    <property type="match status" value="1"/>
</dbReference>
<dbReference type="CDD" id="cd05074">
    <property type="entry name" value="PTKc_Tyro3"/>
    <property type="match status" value="1"/>
</dbReference>
<dbReference type="FunFam" id="1.10.510.10:FF:000089">
    <property type="entry name" value="Tyrosine-protein kinase receptor TYRO3"/>
    <property type="match status" value="1"/>
</dbReference>
<dbReference type="FunFam" id="2.60.40.10:FF:000296">
    <property type="entry name" value="Tyrosine-protein kinase receptor TYRO3"/>
    <property type="match status" value="1"/>
</dbReference>
<dbReference type="FunFam" id="2.60.40.10:FF:000484">
    <property type="entry name" value="Tyrosine-protein kinase receptor TYRO3"/>
    <property type="match status" value="1"/>
</dbReference>
<dbReference type="FunFam" id="2.60.40.10:FF:001653">
    <property type="entry name" value="Tyrosine-protein kinase receptor TYRO3"/>
    <property type="match status" value="1"/>
</dbReference>
<dbReference type="FunFam" id="2.60.40.10:FF:003273">
    <property type="entry name" value="Tyrosine-protein kinase receptor TYRO3"/>
    <property type="match status" value="1"/>
</dbReference>
<dbReference type="FunFam" id="3.30.200.20:FF:000111">
    <property type="entry name" value="Tyrosine-protein kinase receptor TYRO3"/>
    <property type="match status" value="1"/>
</dbReference>
<dbReference type="Gene3D" id="2.60.40.10">
    <property type="entry name" value="Immunoglobulins"/>
    <property type="match status" value="4"/>
</dbReference>
<dbReference type="Gene3D" id="3.30.200.20">
    <property type="entry name" value="Phosphorylase Kinase, domain 1"/>
    <property type="match status" value="1"/>
</dbReference>
<dbReference type="Gene3D" id="1.10.510.10">
    <property type="entry name" value="Transferase(Phosphotransferase) domain 1"/>
    <property type="match status" value="1"/>
</dbReference>
<dbReference type="InterPro" id="IPR003961">
    <property type="entry name" value="FN3_dom"/>
</dbReference>
<dbReference type="InterPro" id="IPR036116">
    <property type="entry name" value="FN3_sf"/>
</dbReference>
<dbReference type="InterPro" id="IPR007110">
    <property type="entry name" value="Ig-like_dom"/>
</dbReference>
<dbReference type="InterPro" id="IPR036179">
    <property type="entry name" value="Ig-like_dom_sf"/>
</dbReference>
<dbReference type="InterPro" id="IPR013783">
    <property type="entry name" value="Ig-like_fold"/>
</dbReference>
<dbReference type="InterPro" id="IPR013098">
    <property type="entry name" value="Ig_I-set"/>
</dbReference>
<dbReference type="InterPro" id="IPR003599">
    <property type="entry name" value="Ig_sub"/>
</dbReference>
<dbReference type="InterPro" id="IPR003598">
    <property type="entry name" value="Ig_sub2"/>
</dbReference>
<dbReference type="InterPro" id="IPR011009">
    <property type="entry name" value="Kinase-like_dom_sf"/>
</dbReference>
<dbReference type="InterPro" id="IPR000719">
    <property type="entry name" value="Prot_kinase_dom"/>
</dbReference>
<dbReference type="InterPro" id="IPR017441">
    <property type="entry name" value="Protein_kinase_ATP_BS"/>
</dbReference>
<dbReference type="InterPro" id="IPR050122">
    <property type="entry name" value="RTK"/>
</dbReference>
<dbReference type="InterPro" id="IPR001245">
    <property type="entry name" value="Ser-Thr/Tyr_kinase_cat_dom"/>
</dbReference>
<dbReference type="InterPro" id="IPR008266">
    <property type="entry name" value="Tyr_kinase_AS"/>
</dbReference>
<dbReference type="InterPro" id="IPR020635">
    <property type="entry name" value="Tyr_kinase_cat_dom"/>
</dbReference>
<dbReference type="PANTHER" id="PTHR24416">
    <property type="entry name" value="TYROSINE-PROTEIN KINASE RECEPTOR"/>
    <property type="match status" value="1"/>
</dbReference>
<dbReference type="PANTHER" id="PTHR24416:SF279">
    <property type="entry name" value="TYROSINE-PROTEIN KINASE RECEPTOR TYRO3"/>
    <property type="match status" value="1"/>
</dbReference>
<dbReference type="Pfam" id="PF00041">
    <property type="entry name" value="fn3"/>
    <property type="match status" value="1"/>
</dbReference>
<dbReference type="Pfam" id="PF07679">
    <property type="entry name" value="I-set"/>
    <property type="match status" value="1"/>
</dbReference>
<dbReference type="Pfam" id="PF07714">
    <property type="entry name" value="PK_Tyr_Ser-Thr"/>
    <property type="match status" value="1"/>
</dbReference>
<dbReference type="PIRSF" id="PIRSF000615">
    <property type="entry name" value="TyrPK_CSF1-R"/>
    <property type="match status" value="1"/>
</dbReference>
<dbReference type="PRINTS" id="PR00109">
    <property type="entry name" value="TYRKINASE"/>
</dbReference>
<dbReference type="SMART" id="SM00060">
    <property type="entry name" value="FN3"/>
    <property type="match status" value="2"/>
</dbReference>
<dbReference type="SMART" id="SM00409">
    <property type="entry name" value="IG"/>
    <property type="match status" value="2"/>
</dbReference>
<dbReference type="SMART" id="SM00408">
    <property type="entry name" value="IGc2"/>
    <property type="match status" value="2"/>
</dbReference>
<dbReference type="SMART" id="SM00219">
    <property type="entry name" value="TyrKc"/>
    <property type="match status" value="1"/>
</dbReference>
<dbReference type="SUPFAM" id="SSF49265">
    <property type="entry name" value="Fibronectin type III"/>
    <property type="match status" value="1"/>
</dbReference>
<dbReference type="SUPFAM" id="SSF48726">
    <property type="entry name" value="Immunoglobulin"/>
    <property type="match status" value="2"/>
</dbReference>
<dbReference type="SUPFAM" id="SSF56112">
    <property type="entry name" value="Protein kinase-like (PK-like)"/>
    <property type="match status" value="1"/>
</dbReference>
<dbReference type="PROSITE" id="PS50853">
    <property type="entry name" value="FN3"/>
    <property type="match status" value="2"/>
</dbReference>
<dbReference type="PROSITE" id="PS50835">
    <property type="entry name" value="IG_LIKE"/>
    <property type="match status" value="2"/>
</dbReference>
<dbReference type="PROSITE" id="PS00107">
    <property type="entry name" value="PROTEIN_KINASE_ATP"/>
    <property type="match status" value="1"/>
</dbReference>
<dbReference type="PROSITE" id="PS50011">
    <property type="entry name" value="PROTEIN_KINASE_DOM"/>
    <property type="match status" value="1"/>
</dbReference>
<dbReference type="PROSITE" id="PS00109">
    <property type="entry name" value="PROTEIN_KINASE_TYR"/>
    <property type="match status" value="1"/>
</dbReference>
<proteinExistence type="evidence at protein level"/>
<organism>
    <name type="scientific">Xenopus laevis</name>
    <name type="common">African clawed frog</name>
    <dbReference type="NCBI Taxonomy" id="8355"/>
    <lineage>
        <taxon>Eukaryota</taxon>
        <taxon>Metazoa</taxon>
        <taxon>Chordata</taxon>
        <taxon>Craniata</taxon>
        <taxon>Vertebrata</taxon>
        <taxon>Euteleostomi</taxon>
        <taxon>Amphibia</taxon>
        <taxon>Batrachia</taxon>
        <taxon>Anura</taxon>
        <taxon>Pipoidea</taxon>
        <taxon>Pipidae</taxon>
        <taxon>Xenopodinae</taxon>
        <taxon>Xenopus</taxon>
        <taxon>Xenopus</taxon>
    </lineage>
</organism>
<protein>
    <recommendedName>
        <fullName>Tyrosine-protein kinase receptor TYRO3</fullName>
        <ecNumber>2.7.10.1</ecNumber>
    </recommendedName>
    <alternativeName>
        <fullName>Xenopus kinase of Sky family</fullName>
        <shortName>Xksy</shortName>
    </alternativeName>
</protein>
<gene>
    <name type="primary">tyro3</name>
    <name type="synonym">ksy</name>
</gene>
<comment type="function">
    <text evidence="1">May be involved in cell adhesion processes, particularly in the central nervous system.</text>
</comment>
<comment type="catalytic activity">
    <reaction evidence="6">
        <text>L-tyrosyl-[protein] + ATP = O-phospho-L-tyrosyl-[protein] + ADP + H(+)</text>
        <dbReference type="Rhea" id="RHEA:10596"/>
        <dbReference type="Rhea" id="RHEA-COMP:10136"/>
        <dbReference type="Rhea" id="RHEA-COMP:20101"/>
        <dbReference type="ChEBI" id="CHEBI:15378"/>
        <dbReference type="ChEBI" id="CHEBI:30616"/>
        <dbReference type="ChEBI" id="CHEBI:46858"/>
        <dbReference type="ChEBI" id="CHEBI:61978"/>
        <dbReference type="ChEBI" id="CHEBI:456216"/>
        <dbReference type="EC" id="2.7.10.1"/>
    </reaction>
</comment>
<comment type="subcellular location">
    <subcellularLocation>
        <location evidence="8">Cell membrane</location>
        <topology evidence="8">Single-pass type I membrane protein</topology>
    </subcellularLocation>
</comment>
<comment type="tissue specificity">
    <text evidence="8">Detected in brain, spinal cord, intestine, lung, stomach, ovary, testis, skin and eye.</text>
</comment>
<comment type="developmental stage">
    <text evidence="8">Levels are high at cleavage and blastula stage, and low at gastrulation stage. Subsequently, levels increase from mid-neurulation to the tail bud stage. Detected in embryonic brain at the tail bud stage.</text>
</comment>
<comment type="PTM">
    <text evidence="8">Tyrosine phosphorylated upon receptor stimulation.</text>
</comment>
<comment type="similarity">
    <text evidence="4">Belongs to the protein kinase superfamily. Tyr protein kinase family. AXL/UFO subfamily.</text>
</comment>